<protein>
    <recommendedName>
        <fullName evidence="1">ATP synthase subunit b</fullName>
    </recommendedName>
    <alternativeName>
        <fullName evidence="1">ATP synthase F(0) sector subunit b</fullName>
    </alternativeName>
    <alternativeName>
        <fullName evidence="1">ATPase subunit I</fullName>
    </alternativeName>
    <alternativeName>
        <fullName evidence="1">F-type ATPase subunit b</fullName>
        <shortName evidence="1">F-ATPase subunit b</shortName>
    </alternativeName>
</protein>
<feature type="chain" id="PRO_0000368621" description="ATP synthase subunit b">
    <location>
        <begin position="1"/>
        <end position="156"/>
    </location>
</feature>
<feature type="transmembrane region" description="Helical" evidence="1">
    <location>
        <begin position="7"/>
        <end position="27"/>
    </location>
</feature>
<name>ATPF_NEIMA</name>
<gene>
    <name evidence="1" type="primary">atpF</name>
    <name type="ordered locus">NMA0515</name>
</gene>
<dbReference type="EMBL" id="AL157959">
    <property type="protein sequence ID" value="CAM07792.1"/>
    <property type="molecule type" value="Genomic_DNA"/>
</dbReference>
<dbReference type="PIR" id="C81025">
    <property type="entry name" value="C81025"/>
</dbReference>
<dbReference type="RefSeq" id="WP_002214796.1">
    <property type="nucleotide sequence ID" value="NC_003116.1"/>
</dbReference>
<dbReference type="SMR" id="A1IPX1"/>
<dbReference type="EnsemblBacteria" id="CAM07792">
    <property type="protein sequence ID" value="CAM07792"/>
    <property type="gene ID" value="NMA0515"/>
</dbReference>
<dbReference type="KEGG" id="nma:NMA0515"/>
<dbReference type="HOGENOM" id="CLU_079215_4_5_4"/>
<dbReference type="Proteomes" id="UP000000626">
    <property type="component" value="Chromosome"/>
</dbReference>
<dbReference type="GO" id="GO:0005886">
    <property type="term" value="C:plasma membrane"/>
    <property type="evidence" value="ECO:0007669"/>
    <property type="project" value="UniProtKB-SubCell"/>
</dbReference>
<dbReference type="GO" id="GO:0045259">
    <property type="term" value="C:proton-transporting ATP synthase complex"/>
    <property type="evidence" value="ECO:0007669"/>
    <property type="project" value="UniProtKB-KW"/>
</dbReference>
<dbReference type="GO" id="GO:0046933">
    <property type="term" value="F:proton-transporting ATP synthase activity, rotational mechanism"/>
    <property type="evidence" value="ECO:0007669"/>
    <property type="project" value="UniProtKB-UniRule"/>
</dbReference>
<dbReference type="GO" id="GO:0046961">
    <property type="term" value="F:proton-transporting ATPase activity, rotational mechanism"/>
    <property type="evidence" value="ECO:0007669"/>
    <property type="project" value="TreeGrafter"/>
</dbReference>
<dbReference type="CDD" id="cd06503">
    <property type="entry name" value="ATP-synt_Fo_b"/>
    <property type="match status" value="1"/>
</dbReference>
<dbReference type="FunFam" id="1.20.5.620:FF:000001">
    <property type="entry name" value="ATP synthase subunit b"/>
    <property type="match status" value="1"/>
</dbReference>
<dbReference type="Gene3D" id="1.20.5.620">
    <property type="entry name" value="F1F0 ATP synthase subunit B, membrane domain"/>
    <property type="match status" value="1"/>
</dbReference>
<dbReference type="HAMAP" id="MF_01398">
    <property type="entry name" value="ATP_synth_b_bprime"/>
    <property type="match status" value="1"/>
</dbReference>
<dbReference type="InterPro" id="IPR028987">
    <property type="entry name" value="ATP_synth_B-like_membr_sf"/>
</dbReference>
<dbReference type="InterPro" id="IPR002146">
    <property type="entry name" value="ATP_synth_b/b'su_bac/chlpt"/>
</dbReference>
<dbReference type="InterPro" id="IPR005864">
    <property type="entry name" value="ATP_synth_F0_bsu_bac"/>
</dbReference>
<dbReference type="InterPro" id="IPR050059">
    <property type="entry name" value="ATP_synthase_B_chain"/>
</dbReference>
<dbReference type="NCBIfam" id="TIGR01144">
    <property type="entry name" value="ATP_synt_b"/>
    <property type="match status" value="1"/>
</dbReference>
<dbReference type="NCBIfam" id="NF004411">
    <property type="entry name" value="PRK05759.1-2"/>
    <property type="match status" value="1"/>
</dbReference>
<dbReference type="PANTHER" id="PTHR33445:SF1">
    <property type="entry name" value="ATP SYNTHASE SUBUNIT B"/>
    <property type="match status" value="1"/>
</dbReference>
<dbReference type="PANTHER" id="PTHR33445">
    <property type="entry name" value="ATP SYNTHASE SUBUNIT B', CHLOROPLASTIC"/>
    <property type="match status" value="1"/>
</dbReference>
<dbReference type="Pfam" id="PF00430">
    <property type="entry name" value="ATP-synt_B"/>
    <property type="match status" value="1"/>
</dbReference>
<dbReference type="SUPFAM" id="SSF81573">
    <property type="entry name" value="F1F0 ATP synthase subunit B, membrane domain"/>
    <property type="match status" value="1"/>
</dbReference>
<reference key="1">
    <citation type="journal article" date="2000" name="Nature">
        <title>Complete DNA sequence of a serogroup A strain of Neisseria meningitidis Z2491.</title>
        <authorList>
            <person name="Parkhill J."/>
            <person name="Achtman M."/>
            <person name="James K.D."/>
            <person name="Bentley S.D."/>
            <person name="Churcher C.M."/>
            <person name="Klee S.R."/>
            <person name="Morelli G."/>
            <person name="Basham D."/>
            <person name="Brown D."/>
            <person name="Chillingworth T."/>
            <person name="Davies R.M."/>
            <person name="Davis P."/>
            <person name="Devlin K."/>
            <person name="Feltwell T."/>
            <person name="Hamlin N."/>
            <person name="Holroyd S."/>
            <person name="Jagels K."/>
            <person name="Leather S."/>
            <person name="Moule S."/>
            <person name="Mungall K.L."/>
            <person name="Quail M.A."/>
            <person name="Rajandream M.A."/>
            <person name="Rutherford K.M."/>
            <person name="Simmonds M."/>
            <person name="Skelton J."/>
            <person name="Whitehead S."/>
            <person name="Spratt B.G."/>
            <person name="Barrell B.G."/>
        </authorList>
    </citation>
    <scope>NUCLEOTIDE SEQUENCE [LARGE SCALE GENOMIC DNA]</scope>
    <source>
        <strain>DSM 15465 / Z2491</strain>
    </source>
</reference>
<comment type="function">
    <text evidence="1">F(1)F(0) ATP synthase produces ATP from ADP in the presence of a proton or sodium gradient. F-type ATPases consist of two structural domains, F(1) containing the extramembraneous catalytic core and F(0) containing the membrane proton channel, linked together by a central stalk and a peripheral stalk. During catalysis, ATP synthesis in the catalytic domain of F(1) is coupled via a rotary mechanism of the central stalk subunits to proton translocation.</text>
</comment>
<comment type="function">
    <text evidence="1">Component of the F(0) channel, it forms part of the peripheral stalk, linking F(1) to F(0).</text>
</comment>
<comment type="subunit">
    <text evidence="1">F-type ATPases have 2 components, F(1) - the catalytic core - and F(0) - the membrane proton channel. F(1) has five subunits: alpha(3), beta(3), gamma(1), delta(1), epsilon(1). F(0) has three main subunits: a(1), b(2) and c(10-14). The alpha and beta chains form an alternating ring which encloses part of the gamma chain. F(1) is attached to F(0) by a central stalk formed by the gamma and epsilon chains, while a peripheral stalk is formed by the delta and b chains.</text>
</comment>
<comment type="subcellular location">
    <subcellularLocation>
        <location evidence="1">Cell inner membrane</location>
        <topology evidence="1">Single-pass membrane protein</topology>
    </subcellularLocation>
</comment>
<comment type="similarity">
    <text evidence="1">Belongs to the ATPase B chain family.</text>
</comment>
<evidence type="ECO:0000255" key="1">
    <source>
        <dbReference type="HAMAP-Rule" id="MF_01398"/>
    </source>
</evidence>
<organism>
    <name type="scientific">Neisseria meningitidis serogroup A / serotype 4A (strain DSM 15465 / Z2491)</name>
    <dbReference type="NCBI Taxonomy" id="122587"/>
    <lineage>
        <taxon>Bacteria</taxon>
        <taxon>Pseudomonadati</taxon>
        <taxon>Pseudomonadota</taxon>
        <taxon>Betaproteobacteria</taxon>
        <taxon>Neisseriales</taxon>
        <taxon>Neisseriaceae</taxon>
        <taxon>Neisseria</taxon>
    </lineage>
</organism>
<sequence>MNINATLFAQIIVFFGLVWFTMKFVWPPIAKALDERAAKVAEGLAAAERGKSDFEQAEKKVAELLAEGRNQVSEMVANAEKRAAKIVEEAKEQASSEAARIAAQAKADVEQELFRARESLREQVAVLAVKGAESILRSEVDASKHAKLLDTLKQEL</sequence>
<accession>A1IPX1</accession>
<proteinExistence type="inferred from homology"/>
<keyword id="KW-0066">ATP synthesis</keyword>
<keyword id="KW-0997">Cell inner membrane</keyword>
<keyword id="KW-1003">Cell membrane</keyword>
<keyword id="KW-0138">CF(0)</keyword>
<keyword id="KW-0375">Hydrogen ion transport</keyword>
<keyword id="KW-0406">Ion transport</keyword>
<keyword id="KW-0472">Membrane</keyword>
<keyword id="KW-0812">Transmembrane</keyword>
<keyword id="KW-1133">Transmembrane helix</keyword>
<keyword id="KW-0813">Transport</keyword>